<dbReference type="EC" id="3.5.4.2" evidence="1"/>
<dbReference type="EMBL" id="AE007870">
    <property type="protein sequence ID" value="AAK89014.1"/>
    <property type="molecule type" value="Genomic_DNA"/>
</dbReference>
<dbReference type="PIR" id="AF3100">
    <property type="entry name" value="AF3100"/>
</dbReference>
<dbReference type="PIR" id="D98186">
    <property type="entry name" value="D98186"/>
</dbReference>
<dbReference type="RefSeq" id="NP_356229.1">
    <property type="nucleotide sequence ID" value="NC_003063.2"/>
</dbReference>
<dbReference type="RefSeq" id="WP_010973838.1">
    <property type="nucleotide sequence ID" value="NC_003063.2"/>
</dbReference>
<dbReference type="PDB" id="3NQB">
    <property type="method" value="X-ray"/>
    <property type="resolution" value="2.21 A"/>
    <property type="chains" value="A/B=1-597"/>
</dbReference>
<dbReference type="PDB" id="3T81">
    <property type="method" value="X-ray"/>
    <property type="resolution" value="2.63 A"/>
    <property type="chains" value="A/B=1-597"/>
</dbReference>
<dbReference type="PDB" id="3T8L">
    <property type="method" value="X-ray"/>
    <property type="resolution" value="2.80 A"/>
    <property type="chains" value="A/B=1-597"/>
</dbReference>
<dbReference type="PDBsum" id="3NQB"/>
<dbReference type="PDBsum" id="3T81"/>
<dbReference type="PDBsum" id="3T8L"/>
<dbReference type="SMR" id="Q7CUX4"/>
<dbReference type="STRING" id="176299.Atu4426"/>
<dbReference type="DNASU" id="1136300"/>
<dbReference type="EnsemblBacteria" id="AAK89014">
    <property type="protein sequence ID" value="AAK89014"/>
    <property type="gene ID" value="Atu4426"/>
</dbReference>
<dbReference type="GeneID" id="1136300"/>
<dbReference type="KEGG" id="atu:Atu4426"/>
<dbReference type="PATRIC" id="fig|176299.10.peg.4234"/>
<dbReference type="eggNOG" id="COG1001">
    <property type="taxonomic scope" value="Bacteria"/>
</dbReference>
<dbReference type="HOGENOM" id="CLU_027935_0_0_5"/>
<dbReference type="OrthoDB" id="9775607at2"/>
<dbReference type="PhylomeDB" id="Q7CUX4"/>
<dbReference type="BioCyc" id="AGRO:ATU4426-MONOMER"/>
<dbReference type="EvolutionaryTrace" id="Q7CUX4"/>
<dbReference type="Proteomes" id="UP000000813">
    <property type="component" value="Chromosome linear"/>
</dbReference>
<dbReference type="GO" id="GO:0000034">
    <property type="term" value="F:adenine deaminase activity"/>
    <property type="evidence" value="ECO:0007669"/>
    <property type="project" value="UniProtKB-UniRule"/>
</dbReference>
<dbReference type="GO" id="GO:0006146">
    <property type="term" value="P:adenine catabolic process"/>
    <property type="evidence" value="ECO:0007669"/>
    <property type="project" value="InterPro"/>
</dbReference>
<dbReference type="CDD" id="cd01295">
    <property type="entry name" value="AdeC"/>
    <property type="match status" value="1"/>
</dbReference>
<dbReference type="Gene3D" id="3.20.20.140">
    <property type="entry name" value="Metal-dependent hydrolases"/>
    <property type="match status" value="1"/>
</dbReference>
<dbReference type="Gene3D" id="2.30.40.10">
    <property type="entry name" value="Urease, subunit C, domain 1"/>
    <property type="match status" value="1"/>
</dbReference>
<dbReference type="HAMAP" id="MF_01518">
    <property type="entry name" value="Adenine_deamin"/>
    <property type="match status" value="1"/>
</dbReference>
<dbReference type="InterPro" id="IPR006679">
    <property type="entry name" value="Adenine_deam"/>
</dbReference>
<dbReference type="InterPro" id="IPR026912">
    <property type="entry name" value="Adenine_deam_C"/>
</dbReference>
<dbReference type="InterPro" id="IPR006680">
    <property type="entry name" value="Amidohydro-rel"/>
</dbReference>
<dbReference type="InterPro" id="IPR011059">
    <property type="entry name" value="Metal-dep_hydrolase_composite"/>
</dbReference>
<dbReference type="InterPro" id="IPR032466">
    <property type="entry name" value="Metal_Hydrolase"/>
</dbReference>
<dbReference type="PANTHER" id="PTHR11113:SF2">
    <property type="entry name" value="ADENINE DEAMINASE"/>
    <property type="match status" value="1"/>
</dbReference>
<dbReference type="PANTHER" id="PTHR11113">
    <property type="entry name" value="N-ACETYLGLUCOSAMINE-6-PHOSPHATE DEACETYLASE"/>
    <property type="match status" value="1"/>
</dbReference>
<dbReference type="Pfam" id="PF13382">
    <property type="entry name" value="Adenine_deam_C"/>
    <property type="match status" value="1"/>
</dbReference>
<dbReference type="Pfam" id="PF01979">
    <property type="entry name" value="Amidohydro_1"/>
    <property type="match status" value="1"/>
</dbReference>
<dbReference type="SUPFAM" id="SSF51338">
    <property type="entry name" value="Composite domain of metallo-dependent hydrolases"/>
    <property type="match status" value="1"/>
</dbReference>
<dbReference type="SUPFAM" id="SSF51556">
    <property type="entry name" value="Metallo-dependent hydrolases"/>
    <property type="match status" value="1"/>
</dbReference>
<sequence length="597" mass="62811">MTAQIRLAEPADLNDDTLRARAVAAARGDQRFDVLITGGTLVDVVTGELRPADIGIVGALIASVHEPASRRDAAQVIDAGGAYVSPGLIDTHMHIESSMITPAAYAAAVVARGVTTIVWDPHEFGNVHGVDGVRWAAKAIENLPLRAILLAPSCVPSAPGLERGGADFDAAILADLLSWPEIGGIAEIMNMRGVIERDPRMSGIVQAGLAAEKLVCGHARGLKNADLNAFMAAGVSSDHELVSGEDLMAKLRAGLTIELRGSHDHLLPEFVAALNTLGHLPQTVTLCTDDVFPDDLLQGGGLDDVVRRLVRYGLKPEWALRAATLNAAQRLGRSDLGLIAAGRRADIVVFEDLNGFSARHVLASGRAVAEGGRMLVDIPTCDTTVLKGSMKLPLRMANDFLVKSQGAKVRLATIDRPRFTQWGETEADVKDGFVVPPEGATMISVTHRHGMAEPTTKTGFLTGWGRWNGAFATTVSHDSHNLTVFGGNAGDMALAANAVIGTGGGMAVASEGKVTAILPLPLSGLVSDAPLEEVARAFEDLREAVGKVVEWQPPYLVFKACFGATLACNIGPHQTDMGIADVLTGKVMESPVIEVLG</sequence>
<accession>Q7CUX4</accession>
<accession>Q8U7M3</accession>
<evidence type="ECO:0000255" key="1">
    <source>
        <dbReference type="HAMAP-Rule" id="MF_01518"/>
    </source>
</evidence>
<evidence type="ECO:0007829" key="2">
    <source>
        <dbReference type="PDB" id="3NQB"/>
    </source>
</evidence>
<evidence type="ECO:0007829" key="3">
    <source>
        <dbReference type="PDB" id="3T81"/>
    </source>
</evidence>
<evidence type="ECO:0007829" key="4">
    <source>
        <dbReference type="PDB" id="3T8L"/>
    </source>
</evidence>
<protein>
    <recommendedName>
        <fullName evidence="1">Adenine deaminase 2</fullName>
        <shortName evidence="1">Adenase 2</shortName>
        <shortName evidence="1">Adenine aminase 2</shortName>
        <ecNumber evidence="1">3.5.4.2</ecNumber>
    </recommendedName>
</protein>
<proteinExistence type="evidence at protein level"/>
<comment type="catalytic activity">
    <reaction evidence="1">
        <text>adenine + H2O + H(+) = hypoxanthine + NH4(+)</text>
        <dbReference type="Rhea" id="RHEA:23688"/>
        <dbReference type="ChEBI" id="CHEBI:15377"/>
        <dbReference type="ChEBI" id="CHEBI:15378"/>
        <dbReference type="ChEBI" id="CHEBI:16708"/>
        <dbReference type="ChEBI" id="CHEBI:17368"/>
        <dbReference type="ChEBI" id="CHEBI:28938"/>
        <dbReference type="EC" id="3.5.4.2"/>
    </reaction>
</comment>
<comment type="cofactor">
    <cofactor evidence="1">
        <name>Mn(2+)</name>
        <dbReference type="ChEBI" id="CHEBI:29035"/>
    </cofactor>
</comment>
<comment type="similarity">
    <text evidence="1">Belongs to the metallo-dependent hydrolases superfamily. Adenine deaminase family.</text>
</comment>
<organism>
    <name type="scientific">Agrobacterium fabrum (strain C58 / ATCC 33970)</name>
    <name type="common">Agrobacterium tumefaciens (strain C58)</name>
    <dbReference type="NCBI Taxonomy" id="176299"/>
    <lineage>
        <taxon>Bacteria</taxon>
        <taxon>Pseudomonadati</taxon>
        <taxon>Pseudomonadota</taxon>
        <taxon>Alphaproteobacteria</taxon>
        <taxon>Hyphomicrobiales</taxon>
        <taxon>Rhizobiaceae</taxon>
        <taxon>Rhizobium/Agrobacterium group</taxon>
        <taxon>Agrobacterium</taxon>
        <taxon>Agrobacterium tumefaciens complex</taxon>
    </lineage>
</organism>
<feature type="chain" id="PRO_0000142399" description="Adenine deaminase 2">
    <location>
        <begin position="1"/>
        <end position="597"/>
    </location>
</feature>
<feature type="helix" evidence="2">
    <location>
        <begin position="11"/>
        <end position="13"/>
    </location>
</feature>
<feature type="helix" evidence="2">
    <location>
        <begin position="16"/>
        <end position="27"/>
    </location>
</feature>
<feature type="strand" evidence="2">
    <location>
        <begin position="32"/>
        <end position="38"/>
    </location>
</feature>
<feature type="strand" evidence="2">
    <location>
        <begin position="40"/>
        <end position="42"/>
    </location>
</feature>
<feature type="turn" evidence="2">
    <location>
        <begin position="44"/>
        <end position="46"/>
    </location>
</feature>
<feature type="strand" evidence="2">
    <location>
        <begin position="49"/>
        <end position="51"/>
    </location>
</feature>
<feature type="strand" evidence="2">
    <location>
        <begin position="53"/>
        <end position="57"/>
    </location>
</feature>
<feature type="strand" evidence="2">
    <location>
        <begin position="60"/>
        <end position="65"/>
    </location>
</feature>
<feature type="strand" evidence="4">
    <location>
        <begin position="67"/>
        <end position="69"/>
    </location>
</feature>
<feature type="strand" evidence="2">
    <location>
        <begin position="73"/>
        <end position="78"/>
    </location>
</feature>
<feature type="strand" evidence="2">
    <location>
        <begin position="82"/>
        <end position="86"/>
    </location>
</feature>
<feature type="strand" evidence="2">
    <location>
        <begin position="88"/>
        <end position="93"/>
    </location>
</feature>
<feature type="helix" evidence="2">
    <location>
        <begin position="95"/>
        <end position="98"/>
    </location>
</feature>
<feature type="helix" evidence="2">
    <location>
        <begin position="102"/>
        <end position="110"/>
    </location>
</feature>
<feature type="turn" evidence="2">
    <location>
        <begin position="111"/>
        <end position="113"/>
    </location>
</feature>
<feature type="strand" evidence="2">
    <location>
        <begin position="114"/>
        <end position="119"/>
    </location>
</feature>
<feature type="helix" evidence="2">
    <location>
        <begin position="122"/>
        <end position="128"/>
    </location>
</feature>
<feature type="helix" evidence="2">
    <location>
        <begin position="130"/>
        <end position="140"/>
    </location>
</feature>
<feature type="strand" evidence="2">
    <location>
        <begin position="144"/>
        <end position="151"/>
    </location>
</feature>
<feature type="strand" evidence="2">
    <location>
        <begin position="155"/>
        <end position="158"/>
    </location>
</feature>
<feature type="turn" evidence="4">
    <location>
        <begin position="159"/>
        <end position="161"/>
    </location>
</feature>
<feature type="helix" evidence="2">
    <location>
        <begin position="170"/>
        <end position="177"/>
    </location>
</feature>
<feature type="strand" evidence="2">
    <location>
        <begin position="182"/>
        <end position="188"/>
    </location>
</feature>
<feature type="helix" evidence="2">
    <location>
        <begin position="191"/>
        <end position="195"/>
    </location>
</feature>
<feature type="helix" evidence="2">
    <location>
        <begin position="199"/>
        <end position="211"/>
    </location>
</feature>
<feature type="strand" evidence="2">
    <location>
        <begin position="214"/>
        <end position="217"/>
    </location>
</feature>
<feature type="helix" evidence="2">
    <location>
        <begin position="224"/>
        <end position="232"/>
    </location>
</feature>
<feature type="helix" evidence="2">
    <location>
        <begin position="244"/>
        <end position="252"/>
    </location>
</feature>
<feature type="strand" evidence="2">
    <location>
        <begin position="256"/>
        <end position="263"/>
    </location>
</feature>
<feature type="helix" evidence="2">
    <location>
        <begin position="264"/>
        <end position="266"/>
    </location>
</feature>
<feature type="helix" evidence="2">
    <location>
        <begin position="267"/>
        <end position="277"/>
    </location>
</feature>
<feature type="strand" evidence="2">
    <location>
        <begin position="284"/>
        <end position="287"/>
    </location>
</feature>
<feature type="helix" evidence="2">
    <location>
        <begin position="293"/>
        <end position="298"/>
    </location>
</feature>
<feature type="helix" evidence="2">
    <location>
        <begin position="302"/>
        <end position="311"/>
    </location>
</feature>
<feature type="helix" evidence="2">
    <location>
        <begin position="316"/>
        <end position="323"/>
    </location>
</feature>
<feature type="helix" evidence="2">
    <location>
        <begin position="325"/>
        <end position="331"/>
    </location>
</feature>
<feature type="strand" evidence="3">
    <location>
        <begin position="336"/>
        <end position="338"/>
    </location>
</feature>
<feature type="strand" evidence="2">
    <location>
        <begin position="347"/>
        <end position="351"/>
    </location>
</feature>
<feature type="turn" evidence="2">
    <location>
        <begin position="353"/>
        <end position="355"/>
    </location>
</feature>
<feature type="strand" evidence="2">
    <location>
        <begin position="358"/>
        <end position="363"/>
    </location>
</feature>
<feature type="strand" evidence="2">
    <location>
        <begin position="366"/>
        <end position="370"/>
    </location>
</feature>
<feature type="strand" evidence="3">
    <location>
        <begin position="373"/>
        <end position="376"/>
    </location>
</feature>
<feature type="helix" evidence="2">
    <location>
        <begin position="384"/>
        <end position="386"/>
    </location>
</feature>
<feature type="helix" evidence="2">
    <location>
        <begin position="397"/>
        <end position="400"/>
    </location>
</feature>
<feature type="strand" evidence="2">
    <location>
        <begin position="405"/>
        <end position="419"/>
    </location>
</feature>
<feature type="strand" evidence="2">
    <location>
        <begin position="421"/>
        <end position="430"/>
    </location>
</feature>
<feature type="strand" evidence="3">
    <location>
        <begin position="431"/>
        <end position="434"/>
    </location>
</feature>
<feature type="strand" evidence="2">
    <location>
        <begin position="440"/>
        <end position="446"/>
    </location>
</feature>
<feature type="strand" evidence="2">
    <location>
        <begin position="449"/>
        <end position="452"/>
    </location>
</feature>
<feature type="strand" evidence="2">
    <location>
        <begin position="456"/>
        <end position="464"/>
    </location>
</feature>
<feature type="strand" evidence="2">
    <location>
        <begin position="468"/>
        <end position="474"/>
    </location>
</feature>
<feature type="turn" evidence="2">
    <location>
        <begin position="477"/>
        <end position="479"/>
    </location>
</feature>
<feature type="strand" evidence="2">
    <location>
        <begin position="482"/>
        <end position="488"/>
    </location>
</feature>
<feature type="helix" evidence="2">
    <location>
        <begin position="489"/>
        <end position="501"/>
    </location>
</feature>
<feature type="strand" evidence="2">
    <location>
        <begin position="504"/>
        <end position="510"/>
    </location>
</feature>
<feature type="strand" evidence="2">
    <location>
        <begin position="513"/>
        <end position="519"/>
    </location>
</feature>
<feature type="turn" evidence="2">
    <location>
        <begin position="523"/>
        <end position="525"/>
    </location>
</feature>
<feature type="strand" evidence="3">
    <location>
        <begin position="526"/>
        <end position="529"/>
    </location>
</feature>
<feature type="helix" evidence="2">
    <location>
        <begin position="531"/>
        <end position="548"/>
    </location>
</feature>
<feature type="turn" evidence="2">
    <location>
        <begin position="553"/>
        <end position="555"/>
    </location>
</feature>
<feature type="helix" evidence="2">
    <location>
        <begin position="558"/>
        <end position="562"/>
    </location>
</feature>
<feature type="strand" evidence="2">
    <location>
        <begin position="569"/>
        <end position="571"/>
    </location>
</feature>
<feature type="strand" evidence="2">
    <location>
        <begin position="576"/>
        <end position="580"/>
    </location>
</feature>
<feature type="turn" evidence="2">
    <location>
        <begin position="582"/>
        <end position="584"/>
    </location>
</feature>
<feature type="strand" evidence="2">
    <location>
        <begin position="587"/>
        <end position="589"/>
    </location>
</feature>
<feature type="strand" evidence="2">
    <location>
        <begin position="591"/>
        <end position="594"/>
    </location>
</feature>
<gene>
    <name evidence="1" type="primary">ade2</name>
    <name type="synonym">adeC</name>
    <name type="ordered locus">Atu4426</name>
    <name type="ORF">AGR_L_883</name>
</gene>
<name>ADEC2_AGRFC</name>
<keyword id="KW-0002">3D-structure</keyword>
<keyword id="KW-0378">Hydrolase</keyword>
<keyword id="KW-0464">Manganese</keyword>
<keyword id="KW-1185">Reference proteome</keyword>
<reference key="1">
    <citation type="journal article" date="2001" name="Science">
        <title>The genome of the natural genetic engineer Agrobacterium tumefaciens C58.</title>
        <authorList>
            <person name="Wood D.W."/>
            <person name="Setubal J.C."/>
            <person name="Kaul R."/>
            <person name="Monks D.E."/>
            <person name="Kitajima J.P."/>
            <person name="Okura V.K."/>
            <person name="Zhou Y."/>
            <person name="Chen L."/>
            <person name="Wood G.E."/>
            <person name="Almeida N.F. Jr."/>
            <person name="Woo L."/>
            <person name="Chen Y."/>
            <person name="Paulsen I.T."/>
            <person name="Eisen J.A."/>
            <person name="Karp P.D."/>
            <person name="Bovee D. Sr."/>
            <person name="Chapman P."/>
            <person name="Clendenning J."/>
            <person name="Deatherage G."/>
            <person name="Gillet W."/>
            <person name="Grant C."/>
            <person name="Kutyavin T."/>
            <person name="Levy R."/>
            <person name="Li M.-J."/>
            <person name="McClelland E."/>
            <person name="Palmieri A."/>
            <person name="Raymond C."/>
            <person name="Rouse G."/>
            <person name="Saenphimmachak C."/>
            <person name="Wu Z."/>
            <person name="Romero P."/>
            <person name="Gordon D."/>
            <person name="Zhang S."/>
            <person name="Yoo H."/>
            <person name="Tao Y."/>
            <person name="Biddle P."/>
            <person name="Jung M."/>
            <person name="Krespan W."/>
            <person name="Perry M."/>
            <person name="Gordon-Kamm B."/>
            <person name="Liao L."/>
            <person name="Kim S."/>
            <person name="Hendrick C."/>
            <person name="Zhao Z.-Y."/>
            <person name="Dolan M."/>
            <person name="Chumley F."/>
            <person name="Tingey S.V."/>
            <person name="Tomb J.-F."/>
            <person name="Gordon M.P."/>
            <person name="Olson M.V."/>
            <person name="Nester E.W."/>
        </authorList>
    </citation>
    <scope>NUCLEOTIDE SEQUENCE [LARGE SCALE GENOMIC DNA]</scope>
    <source>
        <strain>C58 / ATCC 33970</strain>
    </source>
</reference>
<reference key="2">
    <citation type="journal article" date="2001" name="Science">
        <title>Genome sequence of the plant pathogen and biotechnology agent Agrobacterium tumefaciens C58.</title>
        <authorList>
            <person name="Goodner B."/>
            <person name="Hinkle G."/>
            <person name="Gattung S."/>
            <person name="Miller N."/>
            <person name="Blanchard M."/>
            <person name="Qurollo B."/>
            <person name="Goldman B.S."/>
            <person name="Cao Y."/>
            <person name="Askenazi M."/>
            <person name="Halling C."/>
            <person name="Mullin L."/>
            <person name="Houmiel K."/>
            <person name="Gordon J."/>
            <person name="Vaudin M."/>
            <person name="Iartchouk O."/>
            <person name="Epp A."/>
            <person name="Liu F."/>
            <person name="Wollam C."/>
            <person name="Allinger M."/>
            <person name="Doughty D."/>
            <person name="Scott C."/>
            <person name="Lappas C."/>
            <person name="Markelz B."/>
            <person name="Flanagan C."/>
            <person name="Crowell C."/>
            <person name="Gurson J."/>
            <person name="Lomo C."/>
            <person name="Sear C."/>
            <person name="Strub G."/>
            <person name="Cielo C."/>
            <person name="Slater S."/>
        </authorList>
    </citation>
    <scope>NUCLEOTIDE SEQUENCE [LARGE SCALE GENOMIC DNA]</scope>
    <source>
        <strain>C58 / ATCC 33970</strain>
    </source>
</reference>